<keyword id="KW-0963">Cytoplasm</keyword>
<keyword id="KW-0378">Hydrolase</keyword>
<keyword id="KW-0645">Protease</keyword>
<keyword id="KW-1185">Reference proteome</keyword>
<keyword id="KW-0720">Serine protease</keyword>
<dbReference type="EC" id="3.4.21.92" evidence="1"/>
<dbReference type="EMBL" id="BA000036">
    <property type="protein sequence ID" value="BAB99805.1"/>
    <property type="molecule type" value="Genomic_DNA"/>
</dbReference>
<dbReference type="EMBL" id="BX927155">
    <property type="protein sequence ID" value="CAF21076.1"/>
    <property type="status" value="ALT_INIT"/>
    <property type="molecule type" value="Genomic_DNA"/>
</dbReference>
<dbReference type="RefSeq" id="NP_601612.1">
    <property type="nucleotide sequence ID" value="NC_003450.3"/>
</dbReference>
<dbReference type="SMR" id="Q8NN01"/>
<dbReference type="STRING" id="196627.cg2645"/>
<dbReference type="MEROPS" id="S14.008"/>
<dbReference type="KEGG" id="cgb:cg2645"/>
<dbReference type="KEGG" id="cgl:Cgl2412"/>
<dbReference type="PATRIC" id="fig|196627.13.peg.2346"/>
<dbReference type="eggNOG" id="COG0740">
    <property type="taxonomic scope" value="Bacteria"/>
</dbReference>
<dbReference type="HOGENOM" id="CLU_058707_4_1_11"/>
<dbReference type="OrthoDB" id="9802800at2"/>
<dbReference type="BioCyc" id="CORYNE:G18NG-12009-MONOMER"/>
<dbReference type="Proteomes" id="UP000000582">
    <property type="component" value="Chromosome"/>
</dbReference>
<dbReference type="Proteomes" id="UP000001009">
    <property type="component" value="Chromosome"/>
</dbReference>
<dbReference type="GO" id="GO:0005737">
    <property type="term" value="C:cytoplasm"/>
    <property type="evidence" value="ECO:0007669"/>
    <property type="project" value="UniProtKB-SubCell"/>
</dbReference>
<dbReference type="GO" id="GO:0009368">
    <property type="term" value="C:endopeptidase Clp complex"/>
    <property type="evidence" value="ECO:0007669"/>
    <property type="project" value="TreeGrafter"/>
</dbReference>
<dbReference type="GO" id="GO:0004176">
    <property type="term" value="F:ATP-dependent peptidase activity"/>
    <property type="evidence" value="ECO:0007669"/>
    <property type="project" value="InterPro"/>
</dbReference>
<dbReference type="GO" id="GO:0051117">
    <property type="term" value="F:ATPase binding"/>
    <property type="evidence" value="ECO:0007669"/>
    <property type="project" value="TreeGrafter"/>
</dbReference>
<dbReference type="GO" id="GO:0004252">
    <property type="term" value="F:serine-type endopeptidase activity"/>
    <property type="evidence" value="ECO:0007669"/>
    <property type="project" value="UniProtKB-UniRule"/>
</dbReference>
<dbReference type="GO" id="GO:0006515">
    <property type="term" value="P:protein quality control for misfolded or incompletely synthesized proteins"/>
    <property type="evidence" value="ECO:0007669"/>
    <property type="project" value="TreeGrafter"/>
</dbReference>
<dbReference type="CDD" id="cd07017">
    <property type="entry name" value="S14_ClpP_2"/>
    <property type="match status" value="1"/>
</dbReference>
<dbReference type="FunFam" id="3.90.226.10:FF:000002">
    <property type="entry name" value="ATP-dependent Clp protease proteolytic subunit"/>
    <property type="match status" value="1"/>
</dbReference>
<dbReference type="Gene3D" id="3.90.226.10">
    <property type="entry name" value="2-enoyl-CoA Hydratase, Chain A, domain 1"/>
    <property type="match status" value="1"/>
</dbReference>
<dbReference type="HAMAP" id="MF_00444">
    <property type="entry name" value="ClpP"/>
    <property type="match status" value="1"/>
</dbReference>
<dbReference type="InterPro" id="IPR001907">
    <property type="entry name" value="ClpP"/>
</dbReference>
<dbReference type="InterPro" id="IPR029045">
    <property type="entry name" value="ClpP/crotonase-like_dom_sf"/>
</dbReference>
<dbReference type="InterPro" id="IPR023562">
    <property type="entry name" value="ClpP/TepA"/>
</dbReference>
<dbReference type="InterPro" id="IPR033135">
    <property type="entry name" value="ClpP_His_AS"/>
</dbReference>
<dbReference type="NCBIfam" id="NF001368">
    <property type="entry name" value="PRK00277.1"/>
    <property type="match status" value="1"/>
</dbReference>
<dbReference type="NCBIfam" id="NF009205">
    <property type="entry name" value="PRK12553.1"/>
    <property type="match status" value="1"/>
</dbReference>
<dbReference type="PANTHER" id="PTHR10381">
    <property type="entry name" value="ATP-DEPENDENT CLP PROTEASE PROTEOLYTIC SUBUNIT"/>
    <property type="match status" value="1"/>
</dbReference>
<dbReference type="PANTHER" id="PTHR10381:SF70">
    <property type="entry name" value="ATP-DEPENDENT CLP PROTEASE PROTEOLYTIC SUBUNIT"/>
    <property type="match status" value="1"/>
</dbReference>
<dbReference type="Pfam" id="PF00574">
    <property type="entry name" value="CLP_protease"/>
    <property type="match status" value="1"/>
</dbReference>
<dbReference type="PRINTS" id="PR00127">
    <property type="entry name" value="CLPPROTEASEP"/>
</dbReference>
<dbReference type="SUPFAM" id="SSF52096">
    <property type="entry name" value="ClpP/crotonase"/>
    <property type="match status" value="1"/>
</dbReference>
<dbReference type="PROSITE" id="PS00382">
    <property type="entry name" value="CLP_PROTEASE_HIS"/>
    <property type="match status" value="1"/>
</dbReference>
<sequence>MTVFMSDIRMAAQGGPGFGNDVFDRLLSERIIFLGSQVDDEIANKLCAQILLLSAEDPTRDISLYINSPGGSVTAGMAIYDTMKYSPCDIATYGMGLAASMGQFLLSGGTKGKRFALPHARIMMHQPSAGVGGTAADIAIQAEQFAATKREMAQLIAEHTGQTFEQISKDSDRDRWFTAQEAKDYGLVDHVITLAEGPISN</sequence>
<protein>
    <recommendedName>
        <fullName evidence="1">ATP-dependent Clp protease proteolytic subunit 2</fullName>
        <ecNumber evidence="1">3.4.21.92</ecNumber>
    </recommendedName>
    <alternativeName>
        <fullName evidence="1">Endopeptidase Clp 2</fullName>
    </alternativeName>
</protein>
<gene>
    <name evidence="1" type="primary">clpP2</name>
    <name type="ordered locus">Cgl2412</name>
    <name type="ordered locus">cg2645</name>
</gene>
<feature type="chain" id="PRO_0000179546" description="ATP-dependent Clp protease proteolytic subunit 2">
    <location>
        <begin position="1"/>
        <end position="201"/>
    </location>
</feature>
<feature type="active site" description="Nucleophile" evidence="1">
    <location>
        <position position="100"/>
    </location>
</feature>
<feature type="active site" evidence="1">
    <location>
        <position position="125"/>
    </location>
</feature>
<organism>
    <name type="scientific">Corynebacterium glutamicum (strain ATCC 13032 / DSM 20300 / JCM 1318 / BCRC 11384 / CCUG 27702 / LMG 3730 / NBRC 12168 / NCIMB 10025 / NRRL B-2784 / 534)</name>
    <dbReference type="NCBI Taxonomy" id="196627"/>
    <lineage>
        <taxon>Bacteria</taxon>
        <taxon>Bacillati</taxon>
        <taxon>Actinomycetota</taxon>
        <taxon>Actinomycetes</taxon>
        <taxon>Mycobacteriales</taxon>
        <taxon>Corynebacteriaceae</taxon>
        <taxon>Corynebacterium</taxon>
    </lineage>
</organism>
<proteinExistence type="inferred from homology"/>
<evidence type="ECO:0000255" key="1">
    <source>
        <dbReference type="HAMAP-Rule" id="MF_00444"/>
    </source>
</evidence>
<evidence type="ECO:0000305" key="2"/>
<reference key="1">
    <citation type="journal article" date="2003" name="Appl. Microbiol. Biotechnol.">
        <title>The Corynebacterium glutamicum genome: features and impacts on biotechnological processes.</title>
        <authorList>
            <person name="Ikeda M."/>
            <person name="Nakagawa S."/>
        </authorList>
    </citation>
    <scope>NUCLEOTIDE SEQUENCE [LARGE SCALE GENOMIC DNA]</scope>
    <source>
        <strain>ATCC 13032 / DSM 20300 / JCM 1318 / BCRC 11384 / CCUG 27702 / LMG 3730 / NBRC 12168 / NCIMB 10025 / NRRL B-2784 / 534</strain>
    </source>
</reference>
<reference key="2">
    <citation type="journal article" date="2003" name="J. Biotechnol.">
        <title>The complete Corynebacterium glutamicum ATCC 13032 genome sequence and its impact on the production of L-aspartate-derived amino acids and vitamins.</title>
        <authorList>
            <person name="Kalinowski J."/>
            <person name="Bathe B."/>
            <person name="Bartels D."/>
            <person name="Bischoff N."/>
            <person name="Bott M."/>
            <person name="Burkovski A."/>
            <person name="Dusch N."/>
            <person name="Eggeling L."/>
            <person name="Eikmanns B.J."/>
            <person name="Gaigalat L."/>
            <person name="Goesmann A."/>
            <person name="Hartmann M."/>
            <person name="Huthmacher K."/>
            <person name="Kraemer R."/>
            <person name="Linke B."/>
            <person name="McHardy A.C."/>
            <person name="Meyer F."/>
            <person name="Moeckel B."/>
            <person name="Pfefferle W."/>
            <person name="Puehler A."/>
            <person name="Rey D.A."/>
            <person name="Rueckert C."/>
            <person name="Rupp O."/>
            <person name="Sahm H."/>
            <person name="Wendisch V.F."/>
            <person name="Wiegraebe I."/>
            <person name="Tauch A."/>
        </authorList>
    </citation>
    <scope>NUCLEOTIDE SEQUENCE [LARGE SCALE GENOMIC DNA]</scope>
    <source>
        <strain>ATCC 13032 / DSM 20300 / JCM 1318 / BCRC 11384 / CCUG 27702 / LMG 3730 / NBRC 12168 / NCIMB 10025 / NRRL B-2784 / 534</strain>
    </source>
</reference>
<accession>Q8NN01</accession>
<name>CLPP2_CORGL</name>
<comment type="function">
    <text evidence="1">Cleaves peptides in various proteins in a process that requires ATP hydrolysis. Has a chymotrypsin-like activity. Plays a major role in the degradation of misfolded proteins.</text>
</comment>
<comment type="catalytic activity">
    <reaction evidence="1">
        <text>Hydrolysis of proteins to small peptides in the presence of ATP and magnesium. alpha-casein is the usual test substrate. In the absence of ATP, only oligopeptides shorter than five residues are hydrolyzed (such as succinyl-Leu-Tyr-|-NHMec, and Leu-Tyr-Leu-|-Tyr-Trp, in which cleavage of the -Tyr-|-Leu- and -Tyr-|-Trp bonds also occurs).</text>
        <dbReference type="EC" id="3.4.21.92"/>
    </reaction>
</comment>
<comment type="subunit">
    <text evidence="1">Fourteen ClpP subunits assemble into 2 heptameric rings which stack back to back to give a disk-like structure with a central cavity, resembling the structure of eukaryotic proteasomes.</text>
</comment>
<comment type="subcellular location">
    <subcellularLocation>
        <location evidence="1">Cytoplasm</location>
    </subcellularLocation>
</comment>
<comment type="similarity">
    <text evidence="1">Belongs to the peptidase S14 family.</text>
</comment>
<comment type="sequence caution" evidence="2">
    <conflict type="erroneous initiation">
        <sequence resource="EMBL-CDS" id="CAF21076"/>
    </conflict>
</comment>